<feature type="chain" id="PRO_0000164477" description="Uridine kinase">
    <location>
        <begin position="1"/>
        <end position="209"/>
    </location>
</feature>
<feature type="binding site" evidence="1">
    <location>
        <begin position="12"/>
        <end position="19"/>
    </location>
    <ligand>
        <name>ATP</name>
        <dbReference type="ChEBI" id="CHEBI:30616"/>
    </ligand>
</feature>
<comment type="catalytic activity">
    <reaction evidence="1">
        <text>uridine + ATP = UMP + ADP + H(+)</text>
        <dbReference type="Rhea" id="RHEA:16825"/>
        <dbReference type="ChEBI" id="CHEBI:15378"/>
        <dbReference type="ChEBI" id="CHEBI:16704"/>
        <dbReference type="ChEBI" id="CHEBI:30616"/>
        <dbReference type="ChEBI" id="CHEBI:57865"/>
        <dbReference type="ChEBI" id="CHEBI:456216"/>
        <dbReference type="EC" id="2.7.1.48"/>
    </reaction>
</comment>
<comment type="catalytic activity">
    <reaction evidence="1">
        <text>cytidine + ATP = CMP + ADP + H(+)</text>
        <dbReference type="Rhea" id="RHEA:24674"/>
        <dbReference type="ChEBI" id="CHEBI:15378"/>
        <dbReference type="ChEBI" id="CHEBI:17562"/>
        <dbReference type="ChEBI" id="CHEBI:30616"/>
        <dbReference type="ChEBI" id="CHEBI:60377"/>
        <dbReference type="ChEBI" id="CHEBI:456216"/>
        <dbReference type="EC" id="2.7.1.48"/>
    </reaction>
</comment>
<comment type="pathway">
    <text evidence="1">Pyrimidine metabolism; CTP biosynthesis via salvage pathway; CTP from cytidine: step 1/3.</text>
</comment>
<comment type="pathway">
    <text evidence="1">Pyrimidine metabolism; UMP biosynthesis via salvage pathway; UMP from uridine: step 1/1.</text>
</comment>
<comment type="subcellular location">
    <subcellularLocation>
        <location evidence="1">Cytoplasm</location>
    </subcellularLocation>
</comment>
<comment type="similarity">
    <text evidence="1">Belongs to the uridine kinase family.</text>
</comment>
<proteinExistence type="inferred from homology"/>
<keyword id="KW-0067">ATP-binding</keyword>
<keyword id="KW-0963">Cytoplasm</keyword>
<keyword id="KW-0418">Kinase</keyword>
<keyword id="KW-0547">Nucleotide-binding</keyword>
<keyword id="KW-0808">Transferase</keyword>
<organism>
    <name type="scientific">Listeria innocua serovar 6a (strain ATCC BAA-680 / CLIP 11262)</name>
    <dbReference type="NCBI Taxonomy" id="272626"/>
    <lineage>
        <taxon>Bacteria</taxon>
        <taxon>Bacillati</taxon>
        <taxon>Bacillota</taxon>
        <taxon>Bacilli</taxon>
        <taxon>Bacillales</taxon>
        <taxon>Listeriaceae</taxon>
        <taxon>Listeria</taxon>
    </lineage>
</organism>
<protein>
    <recommendedName>
        <fullName evidence="1">Uridine kinase</fullName>
        <ecNumber evidence="1">2.7.1.48</ecNumber>
    </recommendedName>
    <alternativeName>
        <fullName evidence="1">Cytidine monophosphokinase</fullName>
    </alternativeName>
    <alternativeName>
        <fullName evidence="1">Uridine monophosphokinase</fullName>
    </alternativeName>
</protein>
<name>URK_LISIN</name>
<sequence length="209" mass="24207">MTKKPIVVGVTGGSGSGKTSVTKAICDHFSGHSILMIAQDVYYHDQADISFEERLKVNYDHPLAFDTDLLISHIAALRRYETIEKPIYDYEKYTRKQEVEIQEPREVIILEGILILEDKRLRDLMDIKVYVDTDDDIRFIRRLLRDMKERGRTMDSVIDQYLSVVKPMHNEFIEPTKKFADIIIPEGGENHVAIDLMTTKIESILQKHV</sequence>
<reference key="1">
    <citation type="journal article" date="2001" name="Science">
        <title>Comparative genomics of Listeria species.</title>
        <authorList>
            <person name="Glaser P."/>
            <person name="Frangeul L."/>
            <person name="Buchrieser C."/>
            <person name="Rusniok C."/>
            <person name="Amend A."/>
            <person name="Baquero F."/>
            <person name="Berche P."/>
            <person name="Bloecker H."/>
            <person name="Brandt P."/>
            <person name="Chakraborty T."/>
            <person name="Charbit A."/>
            <person name="Chetouani F."/>
            <person name="Couve E."/>
            <person name="de Daruvar A."/>
            <person name="Dehoux P."/>
            <person name="Domann E."/>
            <person name="Dominguez-Bernal G."/>
            <person name="Duchaud E."/>
            <person name="Durant L."/>
            <person name="Dussurget O."/>
            <person name="Entian K.-D."/>
            <person name="Fsihi H."/>
            <person name="Garcia-del Portillo F."/>
            <person name="Garrido P."/>
            <person name="Gautier L."/>
            <person name="Goebel W."/>
            <person name="Gomez-Lopez N."/>
            <person name="Hain T."/>
            <person name="Hauf J."/>
            <person name="Jackson D."/>
            <person name="Jones L.-M."/>
            <person name="Kaerst U."/>
            <person name="Kreft J."/>
            <person name="Kuhn M."/>
            <person name="Kunst F."/>
            <person name="Kurapkat G."/>
            <person name="Madueno E."/>
            <person name="Maitournam A."/>
            <person name="Mata Vicente J."/>
            <person name="Ng E."/>
            <person name="Nedjari H."/>
            <person name="Nordsiek G."/>
            <person name="Novella S."/>
            <person name="de Pablos B."/>
            <person name="Perez-Diaz J.-C."/>
            <person name="Purcell R."/>
            <person name="Remmel B."/>
            <person name="Rose M."/>
            <person name="Schlueter T."/>
            <person name="Simoes N."/>
            <person name="Tierrez A."/>
            <person name="Vazquez-Boland J.-A."/>
            <person name="Voss H."/>
            <person name="Wehland J."/>
            <person name="Cossart P."/>
        </authorList>
    </citation>
    <scope>NUCLEOTIDE SEQUENCE [LARGE SCALE GENOMIC DNA]</scope>
    <source>
        <strain>ATCC BAA-680 / CLIP 11262</strain>
    </source>
</reference>
<gene>
    <name evidence="1" type="primary">udk</name>
    <name type="ordered locus">lin1532</name>
</gene>
<dbReference type="EC" id="2.7.1.48" evidence="1"/>
<dbReference type="EMBL" id="AL596168">
    <property type="protein sequence ID" value="CAC96763.1"/>
    <property type="molecule type" value="Genomic_DNA"/>
</dbReference>
<dbReference type="PIR" id="AC1624">
    <property type="entry name" value="AC1624"/>
</dbReference>
<dbReference type="RefSeq" id="WP_003762345.1">
    <property type="nucleotide sequence ID" value="NC_003212.1"/>
</dbReference>
<dbReference type="SMR" id="Q92BL6"/>
<dbReference type="STRING" id="272626.gene:17565863"/>
<dbReference type="GeneID" id="93234913"/>
<dbReference type="KEGG" id="lin:udk"/>
<dbReference type="eggNOG" id="COG0572">
    <property type="taxonomic scope" value="Bacteria"/>
</dbReference>
<dbReference type="HOGENOM" id="CLU_021278_1_2_9"/>
<dbReference type="OrthoDB" id="9777642at2"/>
<dbReference type="UniPathway" id="UPA00574">
    <property type="reaction ID" value="UER00637"/>
</dbReference>
<dbReference type="UniPathway" id="UPA00579">
    <property type="reaction ID" value="UER00640"/>
</dbReference>
<dbReference type="Proteomes" id="UP000002513">
    <property type="component" value="Chromosome"/>
</dbReference>
<dbReference type="GO" id="GO:0005737">
    <property type="term" value="C:cytoplasm"/>
    <property type="evidence" value="ECO:0007669"/>
    <property type="project" value="UniProtKB-SubCell"/>
</dbReference>
<dbReference type="GO" id="GO:0005524">
    <property type="term" value="F:ATP binding"/>
    <property type="evidence" value="ECO:0007669"/>
    <property type="project" value="UniProtKB-UniRule"/>
</dbReference>
<dbReference type="GO" id="GO:0043771">
    <property type="term" value="F:cytidine kinase activity"/>
    <property type="evidence" value="ECO:0007669"/>
    <property type="project" value="RHEA"/>
</dbReference>
<dbReference type="GO" id="GO:0004849">
    <property type="term" value="F:uridine kinase activity"/>
    <property type="evidence" value="ECO:0007669"/>
    <property type="project" value="UniProtKB-UniRule"/>
</dbReference>
<dbReference type="GO" id="GO:0044211">
    <property type="term" value="P:CTP salvage"/>
    <property type="evidence" value="ECO:0007669"/>
    <property type="project" value="UniProtKB-UniRule"/>
</dbReference>
<dbReference type="GO" id="GO:0044206">
    <property type="term" value="P:UMP salvage"/>
    <property type="evidence" value="ECO:0007669"/>
    <property type="project" value="UniProtKB-UniRule"/>
</dbReference>
<dbReference type="CDD" id="cd02023">
    <property type="entry name" value="UMPK"/>
    <property type="match status" value="1"/>
</dbReference>
<dbReference type="Gene3D" id="3.40.50.300">
    <property type="entry name" value="P-loop containing nucleotide triphosphate hydrolases"/>
    <property type="match status" value="1"/>
</dbReference>
<dbReference type="HAMAP" id="MF_00551">
    <property type="entry name" value="Uridine_kinase"/>
    <property type="match status" value="1"/>
</dbReference>
<dbReference type="InterPro" id="IPR027417">
    <property type="entry name" value="P-loop_NTPase"/>
</dbReference>
<dbReference type="InterPro" id="IPR006083">
    <property type="entry name" value="PRK/URK"/>
</dbReference>
<dbReference type="InterPro" id="IPR026008">
    <property type="entry name" value="Uridine_kinase"/>
</dbReference>
<dbReference type="InterPro" id="IPR000764">
    <property type="entry name" value="Uridine_kinase-like"/>
</dbReference>
<dbReference type="NCBIfam" id="NF004018">
    <property type="entry name" value="PRK05480.1"/>
    <property type="match status" value="1"/>
</dbReference>
<dbReference type="NCBIfam" id="TIGR00235">
    <property type="entry name" value="udk"/>
    <property type="match status" value="1"/>
</dbReference>
<dbReference type="PANTHER" id="PTHR10285">
    <property type="entry name" value="URIDINE KINASE"/>
    <property type="match status" value="1"/>
</dbReference>
<dbReference type="Pfam" id="PF00485">
    <property type="entry name" value="PRK"/>
    <property type="match status" value="1"/>
</dbReference>
<dbReference type="PRINTS" id="PR00988">
    <property type="entry name" value="URIDINKINASE"/>
</dbReference>
<dbReference type="SUPFAM" id="SSF52540">
    <property type="entry name" value="P-loop containing nucleoside triphosphate hydrolases"/>
    <property type="match status" value="1"/>
</dbReference>
<evidence type="ECO:0000255" key="1">
    <source>
        <dbReference type="HAMAP-Rule" id="MF_00551"/>
    </source>
</evidence>
<accession>Q92BL6</accession>